<sequence>MKTFLILALLAIVATTARIAVRVPVPQLQPQNPSQQQPQEQVPLVQQQQFPGQQQPFPPQQPYPQPQPFPSQQPYLQLQPFPQPQLPYPQPQLPYPQPQLPYPQPQPFRPQQPYPQSQPQYSQPQQPISQQQQQQQQQQQQKQQQQQQQQILQQILQQQLIPCRDVVLQQHSIAYGSSQVLQQSTYQLVQQLCCQQLWQIPEQSRCQAIHNVVHAIILHQQQQQQQQQQQQPLSQVSFQQPQQQYPSGQGSFQPSQQNPQAQGSVQPQQLPQFEEIRNLALETLPAMCNVYIPPYCTIAPVGIFGTN</sequence>
<comment type="function">
    <text evidence="5">Gliadin is the major seed storage protein in wheat.</text>
</comment>
<comment type="tissue specificity">
    <text evidence="4">Expressed in endosperm.</text>
</comment>
<comment type="PTM">
    <text evidence="6">Substrate of transglutaminase.</text>
</comment>
<comment type="allergen">
    <text evidence="3">Causes an allergic reaction in human. Is the cause of the celiac disease, also known as celiac sprue or gluten-sensitive enteropathy.</text>
</comment>
<comment type="miscellaneous">
    <text evidence="3">An internal 33-mer peptide seems to be the primary initiator of the inflammatory response to gluten in Celiac Sprue patients.</text>
</comment>
<comment type="miscellaneous">
    <text evidence="5">The alpha/beta-gliadins can be divided into 5 homology classes. Sequence divergence between the classes is due to single base substitutions and to duplications or deletions within or near direct repeats. There are more than a 100 copies of the gene for alpha/beta-gliadin per haploid genome.</text>
</comment>
<comment type="similarity">
    <text evidence="5">Belongs to the gliadin/glutenin family.</text>
</comment>
<protein>
    <recommendedName>
        <fullName>Alpha/beta-gliadin MM1</fullName>
    </recommendedName>
    <alternativeName>
        <fullName>Prolamin</fullName>
    </alternativeName>
</protein>
<dbReference type="EMBL" id="X17361">
    <property type="protein sequence ID" value="CAA35238.1"/>
    <property type="molecule type" value="mRNA"/>
</dbReference>
<dbReference type="PIR" id="S10015">
    <property type="entry name" value="S10015"/>
</dbReference>
<dbReference type="PDB" id="2NNA">
    <property type="method" value="X-ray"/>
    <property type="resolution" value="2.10 A"/>
    <property type="chains" value="C=243-260"/>
</dbReference>
<dbReference type="PDB" id="4GG6">
    <property type="method" value="X-ray"/>
    <property type="resolution" value="3.20 A"/>
    <property type="chains" value="I/J=243-260"/>
</dbReference>
<dbReference type="PDB" id="4OZF">
    <property type="method" value="X-ray"/>
    <property type="resolution" value="2.70 A"/>
    <property type="chains" value="J=96-105"/>
</dbReference>
<dbReference type="PDB" id="4OZG">
    <property type="method" value="X-ray"/>
    <property type="resolution" value="3.00 A"/>
    <property type="chains" value="I/J=96-105"/>
</dbReference>
<dbReference type="PDB" id="4OZH">
    <property type="method" value="X-ray"/>
    <property type="resolution" value="2.80 A"/>
    <property type="chains" value="I/J=96-105"/>
</dbReference>
<dbReference type="PDB" id="4OZI">
    <property type="method" value="X-ray"/>
    <property type="resolution" value="3.20 A"/>
    <property type="chains" value="I/J=79-89"/>
</dbReference>
<dbReference type="PDB" id="4Z7U">
    <property type="method" value="X-ray"/>
    <property type="resolution" value="2.70 A"/>
    <property type="chains" value="I/J=246-264"/>
</dbReference>
<dbReference type="PDB" id="4Z7V">
    <property type="method" value="X-ray"/>
    <property type="resolution" value="2.65 A"/>
    <property type="chains" value="I/J=246-264"/>
</dbReference>
<dbReference type="PDB" id="4Z7W">
    <property type="method" value="X-ray"/>
    <property type="resolution" value="2.89 A"/>
    <property type="chains" value="I/J=246-264"/>
</dbReference>
<dbReference type="PDB" id="5KS9">
    <property type="method" value="X-ray"/>
    <property type="resolution" value="2.55 A"/>
    <property type="chains" value="I/J=246-260"/>
</dbReference>
<dbReference type="PDBsum" id="2NNA"/>
<dbReference type="PDBsum" id="4GG6"/>
<dbReference type="PDBsum" id="4OZF"/>
<dbReference type="PDBsum" id="4OZG"/>
<dbReference type="PDBsum" id="4OZH"/>
<dbReference type="PDBsum" id="4OZI"/>
<dbReference type="PDBsum" id="4Z7U"/>
<dbReference type="PDBsum" id="4Z7V"/>
<dbReference type="PDBsum" id="4Z7W"/>
<dbReference type="PDBsum" id="5KS9"/>
<dbReference type="SMR" id="P18573"/>
<dbReference type="IntAct" id="P18573">
    <property type="interactions" value="1"/>
</dbReference>
<dbReference type="STRING" id="4565.P18573"/>
<dbReference type="ABCD" id="P18573">
    <property type="antibodies" value="32 sequenced antibodies"/>
</dbReference>
<dbReference type="CD-CODE" id="69D46933">
    <property type="entry name" value="Synthetic Condensate 000224"/>
</dbReference>
<dbReference type="EvolutionaryTrace" id="P18573"/>
<dbReference type="Proteomes" id="UP000019116">
    <property type="component" value="Unplaced"/>
</dbReference>
<dbReference type="ExpressionAtlas" id="P18573">
    <property type="expression patterns" value="baseline"/>
</dbReference>
<dbReference type="GO" id="GO:0045735">
    <property type="term" value="F:nutrient reservoir activity"/>
    <property type="evidence" value="ECO:0007669"/>
    <property type="project" value="UniProtKB-KW"/>
</dbReference>
<dbReference type="Gene3D" id="1.10.110.10">
    <property type="entry name" value="Plant lipid-transfer and hydrophobic proteins"/>
    <property type="match status" value="1"/>
</dbReference>
<dbReference type="InterPro" id="IPR036312">
    <property type="entry name" value="Bifun_inhib/LTP/seed_sf"/>
</dbReference>
<dbReference type="InterPro" id="IPR016140">
    <property type="entry name" value="Bifunc_inhib/LTP/seed_store"/>
</dbReference>
<dbReference type="InterPro" id="IPR001954">
    <property type="entry name" value="Glia_glutenin"/>
</dbReference>
<dbReference type="PANTHER" id="PTHR33454:SF7">
    <property type="entry name" value="ALPHA_BETA-GLIADIN MM1"/>
    <property type="match status" value="1"/>
</dbReference>
<dbReference type="PANTHER" id="PTHR33454">
    <property type="entry name" value="PROLAMIN PPROL 14P"/>
    <property type="match status" value="1"/>
</dbReference>
<dbReference type="Pfam" id="PF13016">
    <property type="entry name" value="Gliadin"/>
    <property type="match status" value="1"/>
</dbReference>
<dbReference type="PRINTS" id="PR00208">
    <property type="entry name" value="GLIADGLUTEN"/>
</dbReference>
<dbReference type="PRINTS" id="PR00209">
    <property type="entry name" value="GLIADIN"/>
</dbReference>
<dbReference type="SMART" id="SM00499">
    <property type="entry name" value="AAI"/>
    <property type="match status" value="1"/>
</dbReference>
<dbReference type="SUPFAM" id="SSF47699">
    <property type="entry name" value="Bifunctional inhibitor/lipid-transfer protein/seed storage 2S albumin"/>
    <property type="match status" value="1"/>
</dbReference>
<evidence type="ECO:0000255" key="1"/>
<evidence type="ECO:0000256" key="2">
    <source>
        <dbReference type="SAM" id="MobiDB-lite"/>
    </source>
</evidence>
<evidence type="ECO:0000269" key="3">
    <source>
    </source>
</evidence>
<evidence type="ECO:0000269" key="4">
    <source>
    </source>
</evidence>
<evidence type="ECO:0000305" key="5"/>
<evidence type="ECO:0000305" key="6">
    <source>
    </source>
</evidence>
<feature type="signal peptide" evidence="1">
    <location>
        <begin position="1"/>
        <end position="20"/>
    </location>
</feature>
<feature type="chain" id="PRO_0000032275" description="Alpha/beta-gliadin MM1">
    <location>
        <begin position="21"/>
        <end position="307"/>
    </location>
</feature>
<feature type="region of interest" description="Disordered" evidence="2">
    <location>
        <begin position="29"/>
        <end position="134"/>
    </location>
</feature>
<feature type="region of interest" description="Sufficient to initiate the primary inflammatory response to gluten in Celiac Sprue patients" evidence="3">
    <location>
        <begin position="76"/>
        <end position="108"/>
    </location>
</feature>
<feature type="region of interest" description="Disordered" evidence="2">
    <location>
        <begin position="242"/>
        <end position="267"/>
    </location>
</feature>
<feature type="compositionally biased region" description="Low complexity" evidence="2">
    <location>
        <begin position="29"/>
        <end position="55"/>
    </location>
</feature>
<feature type="compositionally biased region" description="Pro residues" evidence="2">
    <location>
        <begin position="56"/>
        <end position="71"/>
    </location>
</feature>
<feature type="compositionally biased region" description="Pro residues" evidence="2">
    <location>
        <begin position="81"/>
        <end position="113"/>
    </location>
</feature>
<feature type="compositionally biased region" description="Low complexity" evidence="2">
    <location>
        <begin position="114"/>
        <end position="134"/>
    </location>
</feature>
<feature type="compositionally biased region" description="Low complexity" evidence="2">
    <location>
        <begin position="242"/>
        <end position="260"/>
    </location>
</feature>
<organism>
    <name type="scientific">Triticum aestivum</name>
    <name type="common">Wheat</name>
    <dbReference type="NCBI Taxonomy" id="4565"/>
    <lineage>
        <taxon>Eukaryota</taxon>
        <taxon>Viridiplantae</taxon>
        <taxon>Streptophyta</taxon>
        <taxon>Embryophyta</taxon>
        <taxon>Tracheophyta</taxon>
        <taxon>Spermatophyta</taxon>
        <taxon>Magnoliopsida</taxon>
        <taxon>Liliopsida</taxon>
        <taxon>Poales</taxon>
        <taxon>Poaceae</taxon>
        <taxon>BOP clade</taxon>
        <taxon>Pooideae</taxon>
        <taxon>Triticodae</taxon>
        <taxon>Triticeae</taxon>
        <taxon>Triticinae</taxon>
        <taxon>Triticum</taxon>
    </lineage>
</organism>
<name>GDA9_WHEAT</name>
<reference key="1">
    <citation type="journal article" date="1990" name="Plant Mol. Biol.">
        <title>Nucleotide sequence of a cDNA encoding an alpha/beta-type gliadin from hexaploid wheat (Triticum aestivum).</title>
        <authorList>
            <person name="Garcia-Maroto F."/>
            <person name="Manana C."/>
            <person name="Garcia-Olmedo F."/>
            <person name="Carbonero P."/>
        </authorList>
    </citation>
    <scope>NUCLEOTIDE SEQUENCE [MRNA]</scope>
    <scope>TISSUE SPECIFICITY</scope>
    <source>
        <strain>cv. Chinese Spring</strain>
        <tissue>Endosperm</tissue>
    </source>
</reference>
<reference key="2">
    <citation type="journal article" date="2002" name="Science">
        <title>Structural basis for gluten intolerance in celiac sprue.</title>
        <authorList>
            <person name="Shan L."/>
            <person name="Molberg O."/>
            <person name="Parrot I."/>
            <person name="Hausch F."/>
            <person name="Filiz F."/>
            <person name="Gray G.M."/>
            <person name="Sollid L.M."/>
            <person name="Khosla C."/>
        </authorList>
    </citation>
    <scope>ALLERGEN</scope>
    <scope>REGION</scope>
</reference>
<reference key="3">
    <citation type="journal article" date="2007" name="Immunity">
        <title>A structural and immunological basis for the role of human leukocyte antigen DQ8 in celiac disease.</title>
        <authorList>
            <person name="Henderson K.N."/>
            <person name="Tye-Din J.A."/>
            <person name="Reid H.H."/>
            <person name="Chen Z."/>
            <person name="Borg N.A."/>
            <person name="Beissbarth T."/>
            <person name="Tatham A."/>
            <person name="Mannering S.I."/>
            <person name="Purcell A.W."/>
            <person name="Dudek N.L."/>
            <person name="van Heel D.A."/>
            <person name="McCluskey J."/>
            <person name="Rossjohn J."/>
            <person name="Anderson R.P."/>
        </authorList>
    </citation>
    <scope>X-RAY CRYSTALLOGRAPHY (2.1 ANGSTROMS) OF 243-260 IN COMPLEX WITH HLA-DQA1/HLA-DQB1 HETERODIMER</scope>
</reference>
<reference key="4">
    <citation type="journal article" date="2012" name="Immunity">
        <title>Biased T cell receptor usage directed against human leukocyte antigen DQ8-restricted gliadin peptides is associated with celiac disease.</title>
        <authorList>
            <person name="Broughton S.E."/>
            <person name="Petersen J."/>
            <person name="Theodossis A."/>
            <person name="Scally S.W."/>
            <person name="Loh K.L."/>
            <person name="Thompson A."/>
            <person name="van Bergen J."/>
            <person name="Kooy-Winkelaar Y."/>
            <person name="Henderson K.N."/>
            <person name="Beddoe T."/>
            <person name="Tye-Din J.A."/>
            <person name="Mannering S.I."/>
            <person name="Purcell A.W."/>
            <person name="McCluskey J."/>
            <person name="Anderson R.P."/>
            <person name="Koning F."/>
            <person name="Reid H.H."/>
            <person name="Rossjohn J."/>
        </authorList>
    </citation>
    <scope>X-RAY CRYSTALLOGRAPHY (3.20 ANGSTROMS) OF 243-260 IN COMPLEX WITH HLA-DQA1/HLA-DQB1 HETERODIMER</scope>
</reference>
<reference key="5">
    <citation type="journal article" date="2015" name="J. Immunol.">
        <title>Determinants of gliadin-specific T cell selection in celiac disease.</title>
        <authorList>
            <person name="Petersen J."/>
            <person name="van Bergen J."/>
            <person name="Loh K.L."/>
            <person name="Kooy-Winkelaar Y."/>
            <person name="Beringer D.X."/>
            <person name="Thompson A."/>
            <person name="Bakker S.F."/>
            <person name="Mulder C.J."/>
            <person name="Ladell K."/>
            <person name="McLaren J.E."/>
            <person name="Price D.A."/>
            <person name="Rossjohn J."/>
            <person name="Reid H.H."/>
            <person name="Koning F."/>
        </authorList>
    </citation>
    <scope>X-RAY CRYSTALLOGRAPHY (2.65 ANGSTROMS) OF 246-260 IN COMPLEX WITH HLA-DQA1/HLA-DQB1 HETERODIMER</scope>
</reference>
<reference key="6">
    <citation type="journal article" date="2016" name="Structure">
        <title>Diverse T cell receptor gene usage in HLA-DQ8-associated celiac disease converges into a consensus binding solution.</title>
        <authorList>
            <person name="Petersen J."/>
            <person name="Kooy-Winkelaar Y."/>
            <person name="Loh K.L."/>
            <person name="Tran M."/>
            <person name="van Bergen J."/>
            <person name="Koning F."/>
            <person name="Rossjohn J."/>
            <person name="Reid H.H."/>
        </authorList>
    </citation>
    <scope>X-RAY CRYSTALLOGRAPHY (2.55 ANGSTROMS) OF 246-260 IN COMPLEX WITH HLA-DQA1/HLA-DQB1 HETERODIMER</scope>
</reference>
<proteinExistence type="evidence at protein level"/>
<keyword id="KW-0002">3D-structure</keyword>
<keyword id="KW-0020">Allergen</keyword>
<keyword id="KW-1185">Reference proteome</keyword>
<keyword id="KW-0677">Repeat</keyword>
<keyword id="KW-0708">Seed storage protein</keyword>
<keyword id="KW-0732">Signal</keyword>
<keyword id="KW-0758">Storage protein</keyword>
<accession>P18573</accession>